<sequence length="231" mass="25514">MKRAVVVFSGGQDSTTCLVQALQQYDEVHCVTFDYGQRHRAEIDVARELALKLGARAHKVLDVTLLNELAVSSLTRDSIPVPDYEPEADGIPNTFVPGRNILFLTLAAIYAYQVKAEAVITGVCETDFSGYPDCRDEFVKALNHAVSLGMAKDIRFETPLMWIDKAETWALADYYGKLDLVRNETLTCYNGFKGDGCGHCAACNLRANGLNHYLADKPTVMAAMKQKTGLR</sequence>
<dbReference type="EC" id="6.3.4.20" evidence="1"/>
<dbReference type="EMBL" id="CP000948">
    <property type="protein sequence ID" value="ACB01572.1"/>
    <property type="molecule type" value="Genomic_DNA"/>
</dbReference>
<dbReference type="RefSeq" id="WP_000817220.1">
    <property type="nucleotide sequence ID" value="NC_010473.1"/>
</dbReference>
<dbReference type="SMR" id="B1XFN2"/>
<dbReference type="KEGG" id="ecd:ECDH10B_0400"/>
<dbReference type="HOGENOM" id="CLU_081854_0_0_6"/>
<dbReference type="UniPathway" id="UPA00391"/>
<dbReference type="GO" id="GO:0005524">
    <property type="term" value="F:ATP binding"/>
    <property type="evidence" value="ECO:0007669"/>
    <property type="project" value="UniProtKB-UniRule"/>
</dbReference>
<dbReference type="GO" id="GO:0016879">
    <property type="term" value="F:ligase activity, forming carbon-nitrogen bonds"/>
    <property type="evidence" value="ECO:0007669"/>
    <property type="project" value="UniProtKB-UniRule"/>
</dbReference>
<dbReference type="GO" id="GO:0008270">
    <property type="term" value="F:zinc ion binding"/>
    <property type="evidence" value="ECO:0007669"/>
    <property type="project" value="UniProtKB-UniRule"/>
</dbReference>
<dbReference type="GO" id="GO:0008616">
    <property type="term" value="P:queuosine biosynthetic process"/>
    <property type="evidence" value="ECO:0007669"/>
    <property type="project" value="UniProtKB-UniRule"/>
</dbReference>
<dbReference type="CDD" id="cd01995">
    <property type="entry name" value="QueC-like"/>
    <property type="match status" value="1"/>
</dbReference>
<dbReference type="FunFam" id="3.40.50.620:FF:000017">
    <property type="entry name" value="7-cyano-7-deazaguanine synthase"/>
    <property type="match status" value="1"/>
</dbReference>
<dbReference type="Gene3D" id="3.40.50.620">
    <property type="entry name" value="HUPs"/>
    <property type="match status" value="1"/>
</dbReference>
<dbReference type="HAMAP" id="MF_01633">
    <property type="entry name" value="QueC"/>
    <property type="match status" value="1"/>
</dbReference>
<dbReference type="InterPro" id="IPR018317">
    <property type="entry name" value="QueC"/>
</dbReference>
<dbReference type="InterPro" id="IPR014729">
    <property type="entry name" value="Rossmann-like_a/b/a_fold"/>
</dbReference>
<dbReference type="NCBIfam" id="TIGR00364">
    <property type="entry name" value="7-cyano-7-deazaguanine synthase QueC"/>
    <property type="match status" value="1"/>
</dbReference>
<dbReference type="NCBIfam" id="NF008317">
    <property type="entry name" value="PRK11106.1"/>
    <property type="match status" value="1"/>
</dbReference>
<dbReference type="PANTHER" id="PTHR42914">
    <property type="entry name" value="7-CYANO-7-DEAZAGUANINE SYNTHASE"/>
    <property type="match status" value="1"/>
</dbReference>
<dbReference type="PANTHER" id="PTHR42914:SF1">
    <property type="entry name" value="7-CYANO-7-DEAZAGUANINE SYNTHASE"/>
    <property type="match status" value="1"/>
</dbReference>
<dbReference type="Pfam" id="PF06508">
    <property type="entry name" value="QueC"/>
    <property type="match status" value="1"/>
</dbReference>
<dbReference type="PIRSF" id="PIRSF006293">
    <property type="entry name" value="ExsB"/>
    <property type="match status" value="1"/>
</dbReference>
<dbReference type="SUPFAM" id="SSF52402">
    <property type="entry name" value="Adenine nucleotide alpha hydrolases-like"/>
    <property type="match status" value="1"/>
</dbReference>
<accession>B1XFN2</accession>
<evidence type="ECO:0000255" key="1">
    <source>
        <dbReference type="HAMAP-Rule" id="MF_01633"/>
    </source>
</evidence>
<keyword id="KW-0067">ATP-binding</keyword>
<keyword id="KW-0436">Ligase</keyword>
<keyword id="KW-0479">Metal-binding</keyword>
<keyword id="KW-0547">Nucleotide-binding</keyword>
<keyword id="KW-0671">Queuosine biosynthesis</keyword>
<keyword id="KW-0862">Zinc</keyword>
<proteinExistence type="inferred from homology"/>
<protein>
    <recommendedName>
        <fullName evidence="1">7-cyano-7-deazaguanine synthase</fullName>
        <ecNumber evidence="1">6.3.4.20</ecNumber>
    </recommendedName>
    <alternativeName>
        <fullName evidence="1">7-cyano-7-carbaguanine synthase</fullName>
    </alternativeName>
    <alternativeName>
        <fullName evidence="1">PreQ(0) synthase</fullName>
    </alternativeName>
    <alternativeName>
        <fullName evidence="1">Queuosine biosynthesis protein QueC</fullName>
    </alternativeName>
</protein>
<reference key="1">
    <citation type="journal article" date="2008" name="J. Bacteriol.">
        <title>The complete genome sequence of Escherichia coli DH10B: insights into the biology of a laboratory workhorse.</title>
        <authorList>
            <person name="Durfee T."/>
            <person name="Nelson R."/>
            <person name="Baldwin S."/>
            <person name="Plunkett G. III"/>
            <person name="Burland V."/>
            <person name="Mau B."/>
            <person name="Petrosino J.F."/>
            <person name="Qin X."/>
            <person name="Muzny D.M."/>
            <person name="Ayele M."/>
            <person name="Gibbs R.A."/>
            <person name="Csorgo B."/>
            <person name="Posfai G."/>
            <person name="Weinstock G.M."/>
            <person name="Blattner F.R."/>
        </authorList>
    </citation>
    <scope>NUCLEOTIDE SEQUENCE [LARGE SCALE GENOMIC DNA]</scope>
    <source>
        <strain>K12 / DH10B</strain>
    </source>
</reference>
<name>QUEC_ECODH</name>
<feature type="chain" id="PRO_1000186594" description="7-cyano-7-deazaguanine synthase">
    <location>
        <begin position="1"/>
        <end position="231"/>
    </location>
</feature>
<feature type="binding site" evidence="1">
    <location>
        <begin position="8"/>
        <end position="18"/>
    </location>
    <ligand>
        <name>ATP</name>
        <dbReference type="ChEBI" id="CHEBI:30616"/>
    </ligand>
</feature>
<feature type="binding site" evidence="1">
    <location>
        <position position="188"/>
    </location>
    <ligand>
        <name>Zn(2+)</name>
        <dbReference type="ChEBI" id="CHEBI:29105"/>
    </ligand>
</feature>
<feature type="binding site" evidence="1">
    <location>
        <position position="197"/>
    </location>
    <ligand>
        <name>Zn(2+)</name>
        <dbReference type="ChEBI" id="CHEBI:29105"/>
    </ligand>
</feature>
<feature type="binding site" evidence="1">
    <location>
        <position position="200"/>
    </location>
    <ligand>
        <name>Zn(2+)</name>
        <dbReference type="ChEBI" id="CHEBI:29105"/>
    </ligand>
</feature>
<feature type="binding site" evidence="1">
    <location>
        <position position="203"/>
    </location>
    <ligand>
        <name>Zn(2+)</name>
        <dbReference type="ChEBI" id="CHEBI:29105"/>
    </ligand>
</feature>
<comment type="function">
    <text evidence="1">Catalyzes the ATP-dependent conversion of 7-carboxy-7-deazaguanine (CDG) to 7-cyano-7-deazaguanine (preQ(0)).</text>
</comment>
<comment type="catalytic activity">
    <reaction evidence="1">
        <text>7-carboxy-7-deazaguanine + NH4(+) + ATP = 7-cyano-7-deazaguanine + ADP + phosphate + H2O + H(+)</text>
        <dbReference type="Rhea" id="RHEA:27982"/>
        <dbReference type="ChEBI" id="CHEBI:15377"/>
        <dbReference type="ChEBI" id="CHEBI:15378"/>
        <dbReference type="ChEBI" id="CHEBI:28938"/>
        <dbReference type="ChEBI" id="CHEBI:30616"/>
        <dbReference type="ChEBI" id="CHEBI:43474"/>
        <dbReference type="ChEBI" id="CHEBI:45075"/>
        <dbReference type="ChEBI" id="CHEBI:61036"/>
        <dbReference type="ChEBI" id="CHEBI:456216"/>
        <dbReference type="EC" id="6.3.4.20"/>
    </reaction>
</comment>
<comment type="cofactor">
    <cofactor evidence="1">
        <name>Zn(2+)</name>
        <dbReference type="ChEBI" id="CHEBI:29105"/>
    </cofactor>
    <text evidence="1">Binds 1 zinc ion per subunit.</text>
</comment>
<comment type="pathway">
    <text evidence="1">Purine metabolism; 7-cyano-7-deazaguanine biosynthesis.</text>
</comment>
<comment type="similarity">
    <text evidence="1">Belongs to the QueC family.</text>
</comment>
<organism>
    <name type="scientific">Escherichia coli (strain K12 / DH10B)</name>
    <dbReference type="NCBI Taxonomy" id="316385"/>
    <lineage>
        <taxon>Bacteria</taxon>
        <taxon>Pseudomonadati</taxon>
        <taxon>Pseudomonadota</taxon>
        <taxon>Gammaproteobacteria</taxon>
        <taxon>Enterobacterales</taxon>
        <taxon>Enterobacteriaceae</taxon>
        <taxon>Escherichia</taxon>
    </lineage>
</organism>
<gene>
    <name evidence="1" type="primary">queC</name>
    <name type="ordered locus">ECDH10B_0400</name>
</gene>